<accession>Q1G9G0</accession>
<sequence length="349" mass="37160">MIVNRYKDAGVDVNAGYELVRRIKGAVASTKRPGYVGNIGGFGGLFDLDSLGYDHPVLVSGTDGVGTKLIIAQKMDKNDTVGIDVVAMCVNDVLAQGAEPLFFLDYIACGHNDPALLASVVQGVAEGCKQAGASLIGGETAEMPDMYAPDEYDLAGFTVGVAEKDRLLSVDTPQAGDVLLGLASSGVHSNGFSLVRKILFKDHDVKLTDKPAELKGKSVGESLLAPTRIYIKSVLPLIKQGLVHGVAHITGGGLIENVPRMFNDGLRAEIAAGSWEVPDIFNYLKQVGNLSDDDCWQTFNMGLGMILAVPADKKEEAKKLLLASGEKVFEVGHLSERTDGEKIFIKLVE</sequence>
<proteinExistence type="inferred from homology"/>
<dbReference type="EC" id="6.3.3.1" evidence="1"/>
<dbReference type="EMBL" id="CR954253">
    <property type="protein sequence ID" value="CAI98239.1"/>
    <property type="molecule type" value="Genomic_DNA"/>
</dbReference>
<dbReference type="SMR" id="Q1G9G0"/>
<dbReference type="STRING" id="390333.Ldb1438"/>
<dbReference type="KEGG" id="ldb:Ldb1438"/>
<dbReference type="PATRIC" id="fig|390333.13.peg.1930"/>
<dbReference type="eggNOG" id="COG0150">
    <property type="taxonomic scope" value="Bacteria"/>
</dbReference>
<dbReference type="HOGENOM" id="CLU_047116_0_0_9"/>
<dbReference type="UniPathway" id="UPA00074">
    <property type="reaction ID" value="UER00129"/>
</dbReference>
<dbReference type="Proteomes" id="UP000001259">
    <property type="component" value="Chromosome"/>
</dbReference>
<dbReference type="GO" id="GO:0005829">
    <property type="term" value="C:cytosol"/>
    <property type="evidence" value="ECO:0007669"/>
    <property type="project" value="TreeGrafter"/>
</dbReference>
<dbReference type="GO" id="GO:0005524">
    <property type="term" value="F:ATP binding"/>
    <property type="evidence" value="ECO:0007669"/>
    <property type="project" value="UniProtKB-KW"/>
</dbReference>
<dbReference type="GO" id="GO:0004637">
    <property type="term" value="F:phosphoribosylamine-glycine ligase activity"/>
    <property type="evidence" value="ECO:0007669"/>
    <property type="project" value="TreeGrafter"/>
</dbReference>
<dbReference type="GO" id="GO:0004641">
    <property type="term" value="F:phosphoribosylformylglycinamidine cyclo-ligase activity"/>
    <property type="evidence" value="ECO:0007669"/>
    <property type="project" value="UniProtKB-UniRule"/>
</dbReference>
<dbReference type="GO" id="GO:0006189">
    <property type="term" value="P:'de novo' IMP biosynthetic process"/>
    <property type="evidence" value="ECO:0007669"/>
    <property type="project" value="UniProtKB-UniRule"/>
</dbReference>
<dbReference type="GO" id="GO:0046084">
    <property type="term" value="P:adenine biosynthetic process"/>
    <property type="evidence" value="ECO:0007669"/>
    <property type="project" value="TreeGrafter"/>
</dbReference>
<dbReference type="CDD" id="cd02196">
    <property type="entry name" value="PurM"/>
    <property type="match status" value="1"/>
</dbReference>
<dbReference type="FunFam" id="3.30.1330.10:FF:000001">
    <property type="entry name" value="Phosphoribosylformylglycinamidine cyclo-ligase"/>
    <property type="match status" value="1"/>
</dbReference>
<dbReference type="FunFam" id="3.90.650.10:FF:000011">
    <property type="entry name" value="Phosphoribosylformylglycinamidine cyclo-ligase"/>
    <property type="match status" value="1"/>
</dbReference>
<dbReference type="Gene3D" id="3.90.650.10">
    <property type="entry name" value="PurM-like C-terminal domain"/>
    <property type="match status" value="1"/>
</dbReference>
<dbReference type="Gene3D" id="3.30.1330.10">
    <property type="entry name" value="PurM-like, N-terminal domain"/>
    <property type="match status" value="1"/>
</dbReference>
<dbReference type="HAMAP" id="MF_00741">
    <property type="entry name" value="AIRS"/>
    <property type="match status" value="1"/>
</dbReference>
<dbReference type="InterPro" id="IPR010918">
    <property type="entry name" value="PurM-like_C_dom"/>
</dbReference>
<dbReference type="InterPro" id="IPR036676">
    <property type="entry name" value="PurM-like_C_sf"/>
</dbReference>
<dbReference type="InterPro" id="IPR016188">
    <property type="entry name" value="PurM-like_N"/>
</dbReference>
<dbReference type="InterPro" id="IPR036921">
    <property type="entry name" value="PurM-like_N_sf"/>
</dbReference>
<dbReference type="InterPro" id="IPR004733">
    <property type="entry name" value="PurM_cligase"/>
</dbReference>
<dbReference type="NCBIfam" id="TIGR00878">
    <property type="entry name" value="purM"/>
    <property type="match status" value="1"/>
</dbReference>
<dbReference type="PANTHER" id="PTHR10520:SF12">
    <property type="entry name" value="TRIFUNCTIONAL PURINE BIOSYNTHETIC PROTEIN ADENOSINE-3"/>
    <property type="match status" value="1"/>
</dbReference>
<dbReference type="PANTHER" id="PTHR10520">
    <property type="entry name" value="TRIFUNCTIONAL PURINE BIOSYNTHETIC PROTEIN ADENOSINE-3-RELATED"/>
    <property type="match status" value="1"/>
</dbReference>
<dbReference type="Pfam" id="PF00586">
    <property type="entry name" value="AIRS"/>
    <property type="match status" value="1"/>
</dbReference>
<dbReference type="Pfam" id="PF02769">
    <property type="entry name" value="AIRS_C"/>
    <property type="match status" value="1"/>
</dbReference>
<dbReference type="SUPFAM" id="SSF56042">
    <property type="entry name" value="PurM C-terminal domain-like"/>
    <property type="match status" value="1"/>
</dbReference>
<dbReference type="SUPFAM" id="SSF55326">
    <property type="entry name" value="PurM N-terminal domain-like"/>
    <property type="match status" value="1"/>
</dbReference>
<organism>
    <name type="scientific">Lactobacillus delbrueckii subsp. bulgaricus (strain ATCC 11842 / DSM 20081 / BCRC 10696 / JCM 1002 / NBRC 13953 / NCIMB 11778 / NCTC 12712 / WDCM 00102 / Lb 14)</name>
    <dbReference type="NCBI Taxonomy" id="390333"/>
    <lineage>
        <taxon>Bacteria</taxon>
        <taxon>Bacillati</taxon>
        <taxon>Bacillota</taxon>
        <taxon>Bacilli</taxon>
        <taxon>Lactobacillales</taxon>
        <taxon>Lactobacillaceae</taxon>
        <taxon>Lactobacillus</taxon>
    </lineage>
</organism>
<keyword id="KW-0067">ATP-binding</keyword>
<keyword id="KW-0963">Cytoplasm</keyword>
<keyword id="KW-0436">Ligase</keyword>
<keyword id="KW-0547">Nucleotide-binding</keyword>
<keyword id="KW-0658">Purine biosynthesis</keyword>
<keyword id="KW-1185">Reference proteome</keyword>
<evidence type="ECO:0000255" key="1">
    <source>
        <dbReference type="HAMAP-Rule" id="MF_00741"/>
    </source>
</evidence>
<comment type="catalytic activity">
    <reaction evidence="1">
        <text>2-formamido-N(1)-(5-O-phospho-beta-D-ribosyl)acetamidine + ATP = 5-amino-1-(5-phospho-beta-D-ribosyl)imidazole + ADP + phosphate + H(+)</text>
        <dbReference type="Rhea" id="RHEA:23032"/>
        <dbReference type="ChEBI" id="CHEBI:15378"/>
        <dbReference type="ChEBI" id="CHEBI:30616"/>
        <dbReference type="ChEBI" id="CHEBI:43474"/>
        <dbReference type="ChEBI" id="CHEBI:137981"/>
        <dbReference type="ChEBI" id="CHEBI:147287"/>
        <dbReference type="ChEBI" id="CHEBI:456216"/>
        <dbReference type="EC" id="6.3.3.1"/>
    </reaction>
</comment>
<comment type="pathway">
    <text evidence="1">Purine metabolism; IMP biosynthesis via de novo pathway; 5-amino-1-(5-phospho-D-ribosyl)imidazole from N(2)-formyl-N(1)-(5-phospho-D-ribosyl)glycinamide: step 2/2.</text>
</comment>
<comment type="subcellular location">
    <subcellularLocation>
        <location evidence="1">Cytoplasm</location>
    </subcellularLocation>
</comment>
<comment type="similarity">
    <text evidence="1">Belongs to the AIR synthase family.</text>
</comment>
<name>PUR5_LACDA</name>
<feature type="chain" id="PRO_0000258364" description="Phosphoribosylformylglycinamidine cyclo-ligase">
    <location>
        <begin position="1"/>
        <end position="349"/>
    </location>
</feature>
<reference key="1">
    <citation type="journal article" date="2006" name="Proc. Natl. Acad. Sci. U.S.A.">
        <title>The complete genome sequence of Lactobacillus bulgaricus reveals extensive and ongoing reductive evolution.</title>
        <authorList>
            <person name="van de Guchte M."/>
            <person name="Penaud S."/>
            <person name="Grimaldi C."/>
            <person name="Barbe V."/>
            <person name="Bryson K."/>
            <person name="Nicolas P."/>
            <person name="Robert C."/>
            <person name="Oztas S."/>
            <person name="Mangenot S."/>
            <person name="Couloux A."/>
            <person name="Loux V."/>
            <person name="Dervyn R."/>
            <person name="Bossy R."/>
            <person name="Bolotin A."/>
            <person name="Batto J.-M."/>
            <person name="Walunas T."/>
            <person name="Gibrat J.-F."/>
            <person name="Bessieres P."/>
            <person name="Weissenbach J."/>
            <person name="Ehrlich S.D."/>
            <person name="Maguin E."/>
        </authorList>
    </citation>
    <scope>NUCLEOTIDE SEQUENCE [LARGE SCALE GENOMIC DNA]</scope>
    <source>
        <strain>ATCC 11842 / DSM 20081 / BCRC 10696 / JCM 1002 / NBRC 13953 / NCIMB 11778 / NCTC 12712 / WDCM 00102 / Lb 14</strain>
    </source>
</reference>
<gene>
    <name evidence="1" type="primary">purM</name>
    <name type="ordered locus">Ldb1438</name>
</gene>
<protein>
    <recommendedName>
        <fullName evidence="1">Phosphoribosylformylglycinamidine cyclo-ligase</fullName>
        <ecNumber evidence="1">6.3.3.1</ecNumber>
    </recommendedName>
    <alternativeName>
        <fullName evidence="1">AIR synthase</fullName>
    </alternativeName>
    <alternativeName>
        <fullName evidence="1">AIRS</fullName>
    </alternativeName>
    <alternativeName>
        <fullName evidence="1">Phosphoribosyl-aminoimidazole synthetase</fullName>
    </alternativeName>
</protein>